<protein>
    <recommendedName>
        <fullName>Gene 51 glycoprotein</fullName>
    </recommendedName>
</protein>
<organism>
    <name type="scientific">Saimiriine herpesvirus 2 (strain 11)</name>
    <name type="common">SaHV-2</name>
    <name type="synonym">Herpesvirus saimiri</name>
    <dbReference type="NCBI Taxonomy" id="10383"/>
    <lineage>
        <taxon>Viruses</taxon>
        <taxon>Duplodnaviria</taxon>
        <taxon>Heunggongvirae</taxon>
        <taxon>Peploviricota</taxon>
        <taxon>Herviviricetes</taxon>
        <taxon>Herpesvirales</taxon>
        <taxon>Orthoherpesviridae</taxon>
        <taxon>Gammaherpesvirinae</taxon>
        <taxon>Rhadinovirus</taxon>
        <taxon>Rhadinovirus saimiriinegamma2</taxon>
        <taxon>Saimiriine herpesvirus 2</taxon>
    </lineage>
</organism>
<dbReference type="EMBL" id="X64346">
    <property type="protein sequence ID" value="CAA45674.1"/>
    <property type="molecule type" value="Genomic_DNA"/>
</dbReference>
<dbReference type="EMBL" id="M86409">
    <property type="protein sequence ID" value="AAA46128.1"/>
    <property type="molecule type" value="Genomic_DNA"/>
</dbReference>
<dbReference type="EMBL" id="M60850">
    <property type="protein sequence ID" value="AAA46160.1"/>
    <property type="molecule type" value="Genomic_DNA"/>
</dbReference>
<dbReference type="PIR" id="B37994">
    <property type="entry name" value="B37994"/>
</dbReference>
<dbReference type="RefSeq" id="NP_040253.1">
    <property type="nucleotide sequence ID" value="NC_001350.1"/>
</dbReference>
<dbReference type="SMR" id="Q01036"/>
<dbReference type="GlyCosmos" id="Q01036">
    <property type="glycosylation" value="8 sites, No reported glycans"/>
</dbReference>
<dbReference type="KEGG" id="vg:1682470"/>
<dbReference type="Proteomes" id="UP000000587">
    <property type="component" value="Segment"/>
</dbReference>
<name>VG51_SHV21</name>
<feature type="chain" id="PRO_0000116346" description="Gene 51 glycoprotein">
    <location>
        <begin position="1"/>
        <end position="269"/>
    </location>
</feature>
<feature type="region of interest" description="Disordered" evidence="2">
    <location>
        <begin position="67"/>
        <end position="87"/>
    </location>
</feature>
<feature type="region of interest" description="Disordered" evidence="2">
    <location>
        <begin position="103"/>
        <end position="137"/>
    </location>
</feature>
<feature type="compositionally biased region" description="Low complexity" evidence="2">
    <location>
        <begin position="76"/>
        <end position="87"/>
    </location>
</feature>
<feature type="compositionally biased region" description="Polar residues" evidence="2">
    <location>
        <begin position="103"/>
        <end position="112"/>
    </location>
</feature>
<feature type="compositionally biased region" description="Low complexity" evidence="2">
    <location>
        <begin position="113"/>
        <end position="136"/>
    </location>
</feature>
<feature type="glycosylation site" description="N-linked (GlcNAc...) asparagine; by host" evidence="1">
    <location>
        <position position="53"/>
    </location>
</feature>
<feature type="glycosylation site" description="N-linked (GlcNAc...) asparagine; by host" evidence="1">
    <location>
        <position position="58"/>
    </location>
</feature>
<feature type="glycosylation site" description="N-linked (GlcNAc...) asparagine; by host" evidence="1">
    <location>
        <position position="74"/>
    </location>
</feature>
<feature type="glycosylation site" description="N-linked (GlcNAc...) asparagine; by host" evidence="1">
    <location>
        <position position="78"/>
    </location>
</feature>
<feature type="glycosylation site" description="N-linked (GlcNAc...) asparagine; by host" evidence="1">
    <location>
        <position position="137"/>
    </location>
</feature>
<feature type="glycosylation site" description="N-linked (GlcNAc...) asparagine; by host" evidence="1">
    <location>
        <position position="161"/>
    </location>
</feature>
<feature type="glycosylation site" description="N-linked (GlcNAc...) asparagine; by host" evidence="1">
    <location>
        <position position="170"/>
    </location>
</feature>
<feature type="glycosylation site" description="N-linked (GlcNAc...) asparagine; by host" evidence="1">
    <location>
        <position position="191"/>
    </location>
</feature>
<evidence type="ECO:0000255" key="1"/>
<evidence type="ECO:0000256" key="2">
    <source>
        <dbReference type="SAM" id="MobiDB-lite"/>
    </source>
</evidence>
<keyword id="KW-0325">Glycoprotein</keyword>
<keyword id="KW-1185">Reference proteome</keyword>
<sequence length="269" mass="29575">MKAQALLLCSLVLLAQSTDVDDEGSGEVFLQKVSSSVSITASLATTMLTSVTNKTTQNVSVTTIDSLSTSPMHNATSNTSYSQTTPYSQTSLSSSVLISTPQMLNSTPNKPLSSTKLTPKSQSSSQSTKTTKQASKNLTTSKLATSFSSTYMTTSDQPYSNNTANKILLNTTYIYLSTLSKITKLFMQEQNKTTQEPFELITPSSTERDSSTLSKHTNKLKPFKPKTQPIVNMQRTWIYPLTGIVSIVVLLIIMSCIHCYIRRFDEHFE</sequence>
<accession>Q01036</accession>
<proteinExistence type="predicted"/>
<reference key="1">
    <citation type="journal article" date="1992" name="J. Virol.">
        <title>Primary structure of the herpesvirus saimiri genome.</title>
        <authorList>
            <person name="Albrecht J.-C."/>
            <person name="Nicholas J."/>
            <person name="Biller D."/>
            <person name="Cameron K.R."/>
            <person name="Biesinger B."/>
            <person name="Newman C."/>
            <person name="Wittmann S."/>
            <person name="Craxton M.A."/>
            <person name="Coleman H."/>
            <person name="Fleckenstein B."/>
            <person name="Honess R.W."/>
        </authorList>
    </citation>
    <scope>NUCLEOTIDE SEQUENCE [LARGE SCALE GENOMIC DNA]</scope>
</reference>
<reference key="2">
    <citation type="journal article" date="1992" name="Virology">
        <title>Analysis of nucleotide sequence of the rightmost 43 kbp of herpesvirus saimiri (HVS) L-DNA: general conservation of genetic organization between HVS and Epstein-Barr virus.</title>
        <authorList>
            <person name="Nicholas J."/>
            <person name="Cameron K.R."/>
            <person name="Coleman H."/>
            <person name="Newman C."/>
            <person name="Honess R.W."/>
        </authorList>
    </citation>
    <scope>NUCLEOTIDE SEQUENCE [GENOMIC DNA]</scope>
</reference>
<reference key="3">
    <citation type="journal article" date="1988" name="J. Virol.">
        <title>Regulation of the herpesvirus saimiri (HVS) delayed-early 110-kilodalton promoter by HVS immediate-early gene products and a homolog of the Epstein-Barr virus R trans activator.</title>
        <authorList>
            <person name="Nicholas J."/>
            <person name="Coles L.S."/>
            <person name="Newman C."/>
            <person name="Honess R.W."/>
        </authorList>
    </citation>
    <scope>NUCLEOTIDE SEQUENCE [GENOMIC DNA]</scope>
</reference>
<gene>
    <name type="primary">51</name>
    <name type="synonym">EDRF2</name>
</gene>
<organismHost>
    <name type="scientific">Saimiri sciureus</name>
    <name type="common">Common squirrel monkey</name>
    <dbReference type="NCBI Taxonomy" id="9521"/>
</organismHost>